<gene>
    <name type="primary">adcB</name>
    <name type="ORF">DDB_G0274395</name>
</gene>
<dbReference type="EMBL" id="AAFI02000012">
    <property type="protein sequence ID" value="EAL70090.1"/>
    <property type="molecule type" value="Genomic_DNA"/>
</dbReference>
<dbReference type="RefSeq" id="XP_644234.1">
    <property type="nucleotide sequence ID" value="XM_639142.1"/>
</dbReference>
<dbReference type="SMR" id="Q86KB1"/>
<dbReference type="FunCoup" id="Q86KB1">
    <property type="interactions" value="111"/>
</dbReference>
<dbReference type="STRING" id="44689.Q86KB1"/>
<dbReference type="PaxDb" id="44689-DDB0267091"/>
<dbReference type="EnsemblProtists" id="EAL70090">
    <property type="protein sequence ID" value="EAL70090"/>
    <property type="gene ID" value="DDB_G0274395"/>
</dbReference>
<dbReference type="GeneID" id="8619663"/>
<dbReference type="KEGG" id="ddi:DDB_G0274395"/>
<dbReference type="dictyBase" id="DDB_G0274395">
    <property type="gene designation" value="adcB"/>
</dbReference>
<dbReference type="VEuPathDB" id="AmoebaDB:DDB_G0274395"/>
<dbReference type="eggNOG" id="KOG1012">
    <property type="taxonomic scope" value="Eukaryota"/>
</dbReference>
<dbReference type="HOGENOM" id="CLU_443082_0_0_1"/>
<dbReference type="InParanoid" id="Q86KB1"/>
<dbReference type="OMA" id="FRMNCPE"/>
<dbReference type="PRO" id="PR:Q86KB1"/>
<dbReference type="Proteomes" id="UP000002195">
    <property type="component" value="Chromosome 2"/>
</dbReference>
<dbReference type="GO" id="GO:0005737">
    <property type="term" value="C:cytoplasm"/>
    <property type="evidence" value="ECO:0000318"/>
    <property type="project" value="GO_Central"/>
</dbReference>
<dbReference type="GO" id="GO:0005829">
    <property type="term" value="C:cytosol"/>
    <property type="evidence" value="ECO:0000314"/>
    <property type="project" value="dictyBase"/>
</dbReference>
<dbReference type="GO" id="GO:0008603">
    <property type="term" value="F:cAMP-dependent protein kinase regulator activity"/>
    <property type="evidence" value="ECO:0000316"/>
    <property type="project" value="dictyBase"/>
</dbReference>
<dbReference type="GO" id="GO:0042802">
    <property type="term" value="F:identical protein binding"/>
    <property type="evidence" value="ECO:0000353"/>
    <property type="project" value="dictyBase"/>
</dbReference>
<dbReference type="GO" id="GO:0046872">
    <property type="term" value="F:metal ion binding"/>
    <property type="evidence" value="ECO:0007669"/>
    <property type="project" value="UniProtKB-KW"/>
</dbReference>
<dbReference type="GO" id="GO:0031210">
    <property type="term" value="F:phosphatidylcholine binding"/>
    <property type="evidence" value="ECO:0000314"/>
    <property type="project" value="dictyBase"/>
</dbReference>
<dbReference type="GO" id="GO:0001786">
    <property type="term" value="F:phosphatidylserine binding"/>
    <property type="evidence" value="ECO:0000314"/>
    <property type="project" value="dictyBase"/>
</dbReference>
<dbReference type="GO" id="GO:0031152">
    <property type="term" value="P:aggregation involved in sorocarp development"/>
    <property type="evidence" value="ECO:0000316"/>
    <property type="project" value="dictyBase"/>
</dbReference>
<dbReference type="GO" id="GO:0051702">
    <property type="term" value="P:biological process involved in interaction with symbiont"/>
    <property type="evidence" value="ECO:0000315"/>
    <property type="project" value="dictyBase"/>
</dbReference>
<dbReference type="GO" id="GO:0002031">
    <property type="term" value="P:G protein-coupled receptor internalization"/>
    <property type="evidence" value="ECO:0000316"/>
    <property type="project" value="dictyBase"/>
</dbReference>
<dbReference type="GO" id="GO:0110094">
    <property type="term" value="P:polyphosphate-mediated signaling"/>
    <property type="evidence" value="ECO:0000315"/>
    <property type="project" value="dictyBase"/>
</dbReference>
<dbReference type="GO" id="GO:0015031">
    <property type="term" value="P:protein transport"/>
    <property type="evidence" value="ECO:0000318"/>
    <property type="project" value="GO_Central"/>
</dbReference>
<dbReference type="GO" id="GO:0106070">
    <property type="term" value="P:regulation of adenylate cyclase-activating G protein-coupled receptor signaling pathway"/>
    <property type="evidence" value="ECO:0000316"/>
    <property type="project" value="dictyBase"/>
</dbReference>
<dbReference type="FunFam" id="2.60.40.150:FF:000440">
    <property type="entry name" value="Arrestin domain-containing protein B"/>
    <property type="match status" value="1"/>
</dbReference>
<dbReference type="FunFam" id="2.60.40.640:FF:000069">
    <property type="entry name" value="Arrestin domain-containing protein B"/>
    <property type="match status" value="1"/>
</dbReference>
<dbReference type="Gene3D" id="2.60.40.640">
    <property type="match status" value="2"/>
</dbReference>
<dbReference type="Gene3D" id="2.60.40.150">
    <property type="entry name" value="C2 domain"/>
    <property type="match status" value="1"/>
</dbReference>
<dbReference type="Gene3D" id="1.10.150.50">
    <property type="entry name" value="Transcription Factor, Ets-1"/>
    <property type="match status" value="1"/>
</dbReference>
<dbReference type="InterPro" id="IPR014752">
    <property type="entry name" value="Arrestin-like_C"/>
</dbReference>
<dbReference type="InterPro" id="IPR011021">
    <property type="entry name" value="Arrestin-like_N"/>
</dbReference>
<dbReference type="InterPro" id="IPR011022">
    <property type="entry name" value="Arrestin_C-like"/>
</dbReference>
<dbReference type="InterPro" id="IPR050357">
    <property type="entry name" value="Arrestin_domain-protein"/>
</dbReference>
<dbReference type="InterPro" id="IPR000008">
    <property type="entry name" value="C2_dom"/>
</dbReference>
<dbReference type="InterPro" id="IPR035892">
    <property type="entry name" value="C2_domain_sf"/>
</dbReference>
<dbReference type="InterPro" id="IPR014756">
    <property type="entry name" value="Ig_E-set"/>
</dbReference>
<dbReference type="InterPro" id="IPR013761">
    <property type="entry name" value="SAM/pointed_sf"/>
</dbReference>
<dbReference type="PANTHER" id="PTHR11188">
    <property type="entry name" value="ARRESTIN DOMAIN CONTAINING PROTEIN"/>
    <property type="match status" value="1"/>
</dbReference>
<dbReference type="PANTHER" id="PTHR11188:SF162">
    <property type="entry name" value="ARRESTIN DOMAIN-CONTAINING PROTEIN B"/>
    <property type="match status" value="1"/>
</dbReference>
<dbReference type="Pfam" id="PF02752">
    <property type="entry name" value="Arrestin_C"/>
    <property type="match status" value="1"/>
</dbReference>
<dbReference type="Pfam" id="PF00339">
    <property type="entry name" value="Arrestin_N"/>
    <property type="match status" value="1"/>
</dbReference>
<dbReference type="Pfam" id="PF00168">
    <property type="entry name" value="C2"/>
    <property type="match status" value="1"/>
</dbReference>
<dbReference type="SMART" id="SM01017">
    <property type="entry name" value="Arrestin_C"/>
    <property type="match status" value="1"/>
</dbReference>
<dbReference type="SMART" id="SM00239">
    <property type="entry name" value="C2"/>
    <property type="match status" value="1"/>
</dbReference>
<dbReference type="SUPFAM" id="SSF49562">
    <property type="entry name" value="C2 domain (Calcium/lipid-binding domain, CaLB)"/>
    <property type="match status" value="1"/>
</dbReference>
<dbReference type="SUPFAM" id="SSF81296">
    <property type="entry name" value="E set domains"/>
    <property type="match status" value="2"/>
</dbReference>
<dbReference type="PROSITE" id="PS50004">
    <property type="entry name" value="C2"/>
    <property type="match status" value="1"/>
</dbReference>
<evidence type="ECO:0000255" key="1">
    <source>
        <dbReference type="PROSITE-ProRule" id="PRU00041"/>
    </source>
</evidence>
<evidence type="ECO:0000305" key="2"/>
<organism>
    <name type="scientific">Dictyostelium discoideum</name>
    <name type="common">Social amoeba</name>
    <dbReference type="NCBI Taxonomy" id="44689"/>
    <lineage>
        <taxon>Eukaryota</taxon>
        <taxon>Amoebozoa</taxon>
        <taxon>Evosea</taxon>
        <taxon>Eumycetozoa</taxon>
        <taxon>Dictyostelia</taxon>
        <taxon>Dictyosteliales</taxon>
        <taxon>Dictyosteliaceae</taxon>
        <taxon>Dictyostelium</taxon>
    </lineage>
</organism>
<reference key="1">
    <citation type="journal article" date="2002" name="Nature">
        <title>Sequence and analysis of chromosome 2 of Dictyostelium discoideum.</title>
        <authorList>
            <person name="Gloeckner G."/>
            <person name="Eichinger L."/>
            <person name="Szafranski K."/>
            <person name="Pachebat J.A."/>
            <person name="Bankier A.T."/>
            <person name="Dear P.H."/>
            <person name="Lehmann R."/>
            <person name="Baumgart C."/>
            <person name="Parra G."/>
            <person name="Abril J.F."/>
            <person name="Guigo R."/>
            <person name="Kumpf K."/>
            <person name="Tunggal B."/>
            <person name="Cox E.C."/>
            <person name="Quail M.A."/>
            <person name="Platzer M."/>
            <person name="Rosenthal A."/>
            <person name="Noegel A.A."/>
        </authorList>
    </citation>
    <scope>NUCLEOTIDE SEQUENCE [LARGE SCALE GENOMIC DNA]</scope>
    <source>
        <strain>AX4</strain>
    </source>
</reference>
<reference key="2">
    <citation type="journal article" date="2005" name="Nature">
        <title>The genome of the social amoeba Dictyostelium discoideum.</title>
        <authorList>
            <person name="Eichinger L."/>
            <person name="Pachebat J.A."/>
            <person name="Gloeckner G."/>
            <person name="Rajandream M.A."/>
            <person name="Sucgang R."/>
            <person name="Berriman M."/>
            <person name="Song J."/>
            <person name="Olsen R."/>
            <person name="Szafranski K."/>
            <person name="Xu Q."/>
            <person name="Tunggal B."/>
            <person name="Kummerfeld S."/>
            <person name="Madera M."/>
            <person name="Konfortov B.A."/>
            <person name="Rivero F."/>
            <person name="Bankier A.T."/>
            <person name="Lehmann R."/>
            <person name="Hamlin N."/>
            <person name="Davies R."/>
            <person name="Gaudet P."/>
            <person name="Fey P."/>
            <person name="Pilcher K."/>
            <person name="Chen G."/>
            <person name="Saunders D."/>
            <person name="Sodergren E.J."/>
            <person name="Davis P."/>
            <person name="Kerhornou A."/>
            <person name="Nie X."/>
            <person name="Hall N."/>
            <person name="Anjard C."/>
            <person name="Hemphill L."/>
            <person name="Bason N."/>
            <person name="Farbrother P."/>
            <person name="Desany B."/>
            <person name="Just E."/>
            <person name="Morio T."/>
            <person name="Rost R."/>
            <person name="Churcher C.M."/>
            <person name="Cooper J."/>
            <person name="Haydock S."/>
            <person name="van Driessche N."/>
            <person name="Cronin A."/>
            <person name="Goodhead I."/>
            <person name="Muzny D.M."/>
            <person name="Mourier T."/>
            <person name="Pain A."/>
            <person name="Lu M."/>
            <person name="Harper D."/>
            <person name="Lindsay R."/>
            <person name="Hauser H."/>
            <person name="James K.D."/>
            <person name="Quiles M."/>
            <person name="Madan Babu M."/>
            <person name="Saito T."/>
            <person name="Buchrieser C."/>
            <person name="Wardroper A."/>
            <person name="Felder M."/>
            <person name="Thangavelu M."/>
            <person name="Johnson D."/>
            <person name="Knights A."/>
            <person name="Loulseged H."/>
            <person name="Mungall K.L."/>
            <person name="Oliver K."/>
            <person name="Price C."/>
            <person name="Quail M.A."/>
            <person name="Urushihara H."/>
            <person name="Hernandez J."/>
            <person name="Rabbinowitsch E."/>
            <person name="Steffen D."/>
            <person name="Sanders M."/>
            <person name="Ma J."/>
            <person name="Kohara Y."/>
            <person name="Sharp S."/>
            <person name="Simmonds M.N."/>
            <person name="Spiegler S."/>
            <person name="Tivey A."/>
            <person name="Sugano S."/>
            <person name="White B."/>
            <person name="Walker D."/>
            <person name="Woodward J.R."/>
            <person name="Winckler T."/>
            <person name="Tanaka Y."/>
            <person name="Shaulsky G."/>
            <person name="Schleicher M."/>
            <person name="Weinstock G.M."/>
            <person name="Rosenthal A."/>
            <person name="Cox E.C."/>
            <person name="Chisholm R.L."/>
            <person name="Gibbs R.A."/>
            <person name="Loomis W.F."/>
            <person name="Platzer M."/>
            <person name="Kay R.R."/>
            <person name="Williams J.G."/>
            <person name="Dear P.H."/>
            <person name="Noegel A.A."/>
            <person name="Barrell B.G."/>
            <person name="Kuspa A."/>
        </authorList>
    </citation>
    <scope>NUCLEOTIDE SEQUENCE [LARGE SCALE GENOMIC DNA]</scope>
    <source>
        <strain>AX4</strain>
    </source>
</reference>
<comment type="cofactor">
    <cofactor evidence="1">
        <name>Ca(2+)</name>
        <dbReference type="ChEBI" id="CHEBI:29108"/>
    </cofactor>
</comment>
<comment type="similarity">
    <text evidence="2">Belongs to the arrestin family.</text>
</comment>
<proteinExistence type="inferred from homology"/>
<keyword id="KW-0106">Calcium</keyword>
<keyword id="KW-0479">Metal-binding</keyword>
<keyword id="KW-1185">Reference proteome</keyword>
<name>ADCB_DICDI</name>
<sequence>MDNRGLRLFIVEGKELKGSDNGGSSSDPYVKLKFNGNSFKTETIKNTLSPVWNQSFDIGIINVNDPNAIIEVECLDWDRFGKHDSLGKVQLPIAILREAATFGQTDKWLNLDKKGYVRVGFQFNPPYPLQQHISPDGNPNIIQNQIQQQNLISSNGQLPPPVYYEPIYLKTHPTVLEAEFILPNDLYQKTIYVTGEPVRASLVLYVNQPIVVRSLFVSLKGKTSVCGKKQKELIQDLRNLLHTSIGPSSPNSQNQKVALDIGKHIYPFEFFIPKHCNSSIDGVGNYKVLYRFQFNADIVNLPDIQLEREITVVNIEDTVHRMTQSQIHEKCSKSPLTGGTIEMTITAPKNSYYPGEDIELQVHVNNSSKKKVKKIELELQRTISIQHEKGVPTQVLKVSKNFFPKIQQNQQSTQIVVMETPQTLLNSIYQSGIIKIEYKVRAVLDILDCIDLYTIFPVNIVLPDPKRVILPNPLDELSKIPRYIQDWTPRNLLSWLYFRMNCPEVVTSNPEFYQYCLSGNELLSIPDTILLEKVLKGAGTRTTEIHNAIKIEIDRVLSVRTILKDNQLPHLIQTFENELVTFDLLSSLSSIDLSHLTSTIGDRIRLQNAFEKLKLNN</sequence>
<feature type="chain" id="PRO_0000363155" description="Arrestin domain-containing protein B">
    <location>
        <begin position="1"/>
        <end position="617"/>
    </location>
</feature>
<feature type="domain" description="C2" evidence="1">
    <location>
        <begin position="1"/>
        <end position="109"/>
    </location>
</feature>
<feature type="binding site" evidence="1">
    <location>
        <position position="20"/>
    </location>
    <ligand>
        <name>Ca(2+)</name>
        <dbReference type="ChEBI" id="CHEBI:29108"/>
        <label>1</label>
    </ligand>
</feature>
<feature type="binding site" evidence="1">
    <location>
        <position position="20"/>
    </location>
    <ligand>
        <name>Ca(2+)</name>
        <dbReference type="ChEBI" id="CHEBI:29108"/>
        <label>2</label>
    </ligand>
</feature>
<feature type="binding site" evidence="1">
    <location>
        <position position="27"/>
    </location>
    <ligand>
        <name>Ca(2+)</name>
        <dbReference type="ChEBI" id="CHEBI:29108"/>
        <label>1</label>
    </ligand>
</feature>
<feature type="binding site" evidence="1">
    <location>
        <position position="76"/>
    </location>
    <ligand>
        <name>Ca(2+)</name>
        <dbReference type="ChEBI" id="CHEBI:29108"/>
        <label>1</label>
    </ligand>
</feature>
<feature type="binding site" evidence="1">
    <location>
        <position position="76"/>
    </location>
    <ligand>
        <name>Ca(2+)</name>
        <dbReference type="ChEBI" id="CHEBI:29108"/>
        <label>2</label>
    </ligand>
</feature>
<feature type="binding site" evidence="1">
    <location>
        <position position="78"/>
    </location>
    <ligand>
        <name>Ca(2+)</name>
        <dbReference type="ChEBI" id="CHEBI:29108"/>
        <label>1</label>
    </ligand>
</feature>
<feature type="binding site" evidence="1">
    <location>
        <position position="78"/>
    </location>
    <ligand>
        <name>Ca(2+)</name>
        <dbReference type="ChEBI" id="CHEBI:29108"/>
        <label>2</label>
    </ligand>
</feature>
<feature type="binding site" evidence="1">
    <location>
        <position position="84"/>
    </location>
    <ligand>
        <name>Ca(2+)</name>
        <dbReference type="ChEBI" id="CHEBI:29108"/>
        <label>2</label>
    </ligand>
</feature>
<accession>Q86KB1</accession>
<accession>Q554T9</accession>
<protein>
    <recommendedName>
        <fullName>Arrestin domain-containing protein B</fullName>
    </recommendedName>
</protein>